<evidence type="ECO:0000255" key="1">
    <source>
        <dbReference type="HAMAP-Rule" id="MF_01216"/>
    </source>
</evidence>
<name>AZOR2_BRADU</name>
<feature type="chain" id="PRO_0000166330" description="FMN-dependent NADH:quinone oxidoreductase 2">
    <location>
        <begin position="1"/>
        <end position="202"/>
    </location>
</feature>
<feature type="binding site" evidence="1">
    <location>
        <position position="9"/>
    </location>
    <ligand>
        <name>FMN</name>
        <dbReference type="ChEBI" id="CHEBI:58210"/>
    </ligand>
</feature>
<feature type="binding site" evidence="1">
    <location>
        <begin position="15"/>
        <end position="17"/>
    </location>
    <ligand>
        <name>FMN</name>
        <dbReference type="ChEBI" id="CHEBI:58210"/>
    </ligand>
</feature>
<feature type="binding site" evidence="1">
    <location>
        <begin position="93"/>
        <end position="96"/>
    </location>
    <ligand>
        <name>FMN</name>
        <dbReference type="ChEBI" id="CHEBI:58210"/>
    </ligand>
</feature>
<feature type="binding site" evidence="1">
    <location>
        <begin position="137"/>
        <end position="140"/>
    </location>
    <ligand>
        <name>FMN</name>
        <dbReference type="ChEBI" id="CHEBI:58210"/>
    </ligand>
</feature>
<organism>
    <name type="scientific">Bradyrhizobium diazoefficiens (strain JCM 10833 / BCRC 13528 / IAM 13628 / NBRC 14792 / USDA 110)</name>
    <dbReference type="NCBI Taxonomy" id="224911"/>
    <lineage>
        <taxon>Bacteria</taxon>
        <taxon>Pseudomonadati</taxon>
        <taxon>Pseudomonadota</taxon>
        <taxon>Alphaproteobacteria</taxon>
        <taxon>Hyphomicrobiales</taxon>
        <taxon>Nitrobacteraceae</taxon>
        <taxon>Bradyrhizobium</taxon>
    </lineage>
</organism>
<sequence>MKLLHIDSSVLGPHSVSRQVSAAIVDRLRQATPSLEVVYRDLTQTPLAHLSGSHLAAAQGAPAPAELGPDLAASAAVLNEFLAADVVVIGAPMYNFTIPSQLKAWIDRILVAGKTFQYGANGPQGLAGAKRVIVAISRGGYYGADMPTAAGEHLETYLRWVFGFIGITDPEFISADGIQVGPDHREKALAGALQAATSLQAA</sequence>
<keyword id="KW-0285">Flavoprotein</keyword>
<keyword id="KW-0288">FMN</keyword>
<keyword id="KW-0520">NAD</keyword>
<keyword id="KW-0560">Oxidoreductase</keyword>
<keyword id="KW-1185">Reference proteome</keyword>
<proteinExistence type="inferred from homology"/>
<comment type="function">
    <text evidence="1">Quinone reductase that provides resistance to thiol-specific stress caused by electrophilic quinones.</text>
</comment>
<comment type="function">
    <text evidence="1">Also exhibits azoreductase activity. Catalyzes the reductive cleavage of the azo bond in aromatic azo compounds to the corresponding amines.</text>
</comment>
<comment type="catalytic activity">
    <reaction evidence="1">
        <text>2 a quinone + NADH + H(+) = 2 a 1,4-benzosemiquinone + NAD(+)</text>
        <dbReference type="Rhea" id="RHEA:65952"/>
        <dbReference type="ChEBI" id="CHEBI:15378"/>
        <dbReference type="ChEBI" id="CHEBI:57540"/>
        <dbReference type="ChEBI" id="CHEBI:57945"/>
        <dbReference type="ChEBI" id="CHEBI:132124"/>
        <dbReference type="ChEBI" id="CHEBI:134225"/>
    </reaction>
</comment>
<comment type="catalytic activity">
    <reaction evidence="1">
        <text>N,N-dimethyl-1,4-phenylenediamine + anthranilate + 2 NAD(+) = 2-(4-dimethylaminophenyl)diazenylbenzoate + 2 NADH + 2 H(+)</text>
        <dbReference type="Rhea" id="RHEA:55872"/>
        <dbReference type="ChEBI" id="CHEBI:15378"/>
        <dbReference type="ChEBI" id="CHEBI:15783"/>
        <dbReference type="ChEBI" id="CHEBI:16567"/>
        <dbReference type="ChEBI" id="CHEBI:57540"/>
        <dbReference type="ChEBI" id="CHEBI:57945"/>
        <dbReference type="ChEBI" id="CHEBI:71579"/>
        <dbReference type="EC" id="1.7.1.17"/>
    </reaction>
</comment>
<comment type="cofactor">
    <cofactor evidence="1">
        <name>FMN</name>
        <dbReference type="ChEBI" id="CHEBI:58210"/>
    </cofactor>
    <text evidence="1">Binds 1 FMN per subunit.</text>
</comment>
<comment type="subunit">
    <text evidence="1">Homodimer.</text>
</comment>
<comment type="similarity">
    <text evidence="1">Belongs to the azoreductase type 1 family.</text>
</comment>
<dbReference type="EC" id="1.6.5.-" evidence="1"/>
<dbReference type="EC" id="1.7.1.17" evidence="1"/>
<dbReference type="EMBL" id="BA000040">
    <property type="protein sequence ID" value="BAC50371.1"/>
    <property type="molecule type" value="Genomic_DNA"/>
</dbReference>
<dbReference type="RefSeq" id="NP_771746.1">
    <property type="nucleotide sequence ID" value="NC_004463.1"/>
</dbReference>
<dbReference type="RefSeq" id="WP_011087866.1">
    <property type="nucleotide sequence ID" value="NC_004463.1"/>
</dbReference>
<dbReference type="SMR" id="Q89K13"/>
<dbReference type="FunCoup" id="Q89K13">
    <property type="interactions" value="79"/>
</dbReference>
<dbReference type="EnsemblBacteria" id="BAC50371">
    <property type="protein sequence ID" value="BAC50371"/>
    <property type="gene ID" value="BAC50371"/>
</dbReference>
<dbReference type="GeneID" id="46492112"/>
<dbReference type="KEGG" id="bja:blr5106"/>
<dbReference type="PATRIC" id="fig|224911.44.peg.4975"/>
<dbReference type="eggNOG" id="COG1182">
    <property type="taxonomic scope" value="Bacteria"/>
</dbReference>
<dbReference type="HOGENOM" id="CLU_088964_0_0_5"/>
<dbReference type="InParanoid" id="Q89K13"/>
<dbReference type="OrthoDB" id="9787136at2"/>
<dbReference type="PhylomeDB" id="Q89K13"/>
<dbReference type="Proteomes" id="UP000002526">
    <property type="component" value="Chromosome"/>
</dbReference>
<dbReference type="GO" id="GO:0009055">
    <property type="term" value="F:electron transfer activity"/>
    <property type="evidence" value="ECO:0007669"/>
    <property type="project" value="UniProtKB-UniRule"/>
</dbReference>
<dbReference type="GO" id="GO:0010181">
    <property type="term" value="F:FMN binding"/>
    <property type="evidence" value="ECO:0007669"/>
    <property type="project" value="UniProtKB-UniRule"/>
</dbReference>
<dbReference type="GO" id="GO:0016652">
    <property type="term" value="F:oxidoreductase activity, acting on NAD(P)H as acceptor"/>
    <property type="evidence" value="ECO:0007669"/>
    <property type="project" value="UniProtKB-UniRule"/>
</dbReference>
<dbReference type="GO" id="GO:0016655">
    <property type="term" value="F:oxidoreductase activity, acting on NAD(P)H, quinone or similar compound as acceptor"/>
    <property type="evidence" value="ECO:0007669"/>
    <property type="project" value="InterPro"/>
</dbReference>
<dbReference type="Gene3D" id="3.40.50.360">
    <property type="match status" value="1"/>
</dbReference>
<dbReference type="HAMAP" id="MF_01216">
    <property type="entry name" value="Azoreductase_type1"/>
    <property type="match status" value="1"/>
</dbReference>
<dbReference type="InterPro" id="IPR003680">
    <property type="entry name" value="Flavodoxin_fold"/>
</dbReference>
<dbReference type="InterPro" id="IPR029039">
    <property type="entry name" value="Flavoprotein-like_sf"/>
</dbReference>
<dbReference type="InterPro" id="IPR050104">
    <property type="entry name" value="FMN-dep_NADH:Q_OxRdtase_AzoR1"/>
</dbReference>
<dbReference type="InterPro" id="IPR023048">
    <property type="entry name" value="NADH:quinone_OxRdtase_FMN_depd"/>
</dbReference>
<dbReference type="PANTHER" id="PTHR43741">
    <property type="entry name" value="FMN-DEPENDENT NADH-AZOREDUCTASE 1"/>
    <property type="match status" value="1"/>
</dbReference>
<dbReference type="PANTHER" id="PTHR43741:SF4">
    <property type="entry name" value="FMN-DEPENDENT NADH:QUINONE OXIDOREDUCTASE"/>
    <property type="match status" value="1"/>
</dbReference>
<dbReference type="Pfam" id="PF02525">
    <property type="entry name" value="Flavodoxin_2"/>
    <property type="match status" value="1"/>
</dbReference>
<dbReference type="SUPFAM" id="SSF52218">
    <property type="entry name" value="Flavoproteins"/>
    <property type="match status" value="1"/>
</dbReference>
<reference key="1">
    <citation type="journal article" date="2002" name="DNA Res.">
        <title>Complete genomic sequence of nitrogen-fixing symbiotic bacterium Bradyrhizobium japonicum USDA110.</title>
        <authorList>
            <person name="Kaneko T."/>
            <person name="Nakamura Y."/>
            <person name="Sato S."/>
            <person name="Minamisawa K."/>
            <person name="Uchiumi T."/>
            <person name="Sasamoto S."/>
            <person name="Watanabe A."/>
            <person name="Idesawa K."/>
            <person name="Iriguchi M."/>
            <person name="Kawashima K."/>
            <person name="Kohara M."/>
            <person name="Matsumoto M."/>
            <person name="Shimpo S."/>
            <person name="Tsuruoka H."/>
            <person name="Wada T."/>
            <person name="Yamada M."/>
            <person name="Tabata S."/>
        </authorList>
    </citation>
    <scope>NUCLEOTIDE SEQUENCE [LARGE SCALE GENOMIC DNA]</scope>
    <source>
        <strain>JCM 10833 / BCRC 13528 / IAM 13628 / NBRC 14792 / USDA 110</strain>
    </source>
</reference>
<protein>
    <recommendedName>
        <fullName evidence="1">FMN-dependent NADH:quinone oxidoreductase 2</fullName>
        <ecNumber evidence="1">1.6.5.-</ecNumber>
    </recommendedName>
    <alternativeName>
        <fullName evidence="1">Azo-dye reductase 2</fullName>
    </alternativeName>
    <alternativeName>
        <fullName evidence="1">FMN-dependent NADH-azo compound oxidoreductase 2</fullName>
    </alternativeName>
    <alternativeName>
        <fullName evidence="1">FMN-dependent NADH-azoreductase 2</fullName>
        <ecNumber evidence="1">1.7.1.17</ecNumber>
    </alternativeName>
</protein>
<gene>
    <name evidence="1" type="primary">azoR2</name>
    <name type="ordered locus">blr5106</name>
</gene>
<accession>Q89K13</accession>